<reference key="1">
    <citation type="journal article" date="1993" name="Arch. Biochem. Biophys.">
        <title>Amino acid sequence of a high redox potential ferredoxin (HiPIP) from the purple phototrophic bacterium Rhodopila globiformis, which has the highest known redox potential of its class.</title>
        <authorList>
            <person name="Ambler R.P."/>
            <person name="Meyer T.E."/>
            <person name="Kamen M.D."/>
        </authorList>
    </citation>
    <scope>PROTEIN SEQUENCE</scope>
</reference>
<dbReference type="PIR" id="S38752">
    <property type="entry name" value="S38752"/>
</dbReference>
<dbReference type="SMR" id="P38589"/>
<dbReference type="GO" id="GO:0051539">
    <property type="term" value="F:4 iron, 4 sulfur cluster binding"/>
    <property type="evidence" value="ECO:0007669"/>
    <property type="project" value="UniProtKB-KW"/>
</dbReference>
<dbReference type="GO" id="GO:0009055">
    <property type="term" value="F:electron transfer activity"/>
    <property type="evidence" value="ECO:0007669"/>
    <property type="project" value="InterPro"/>
</dbReference>
<dbReference type="GO" id="GO:0046872">
    <property type="term" value="F:metal ion binding"/>
    <property type="evidence" value="ECO:0007669"/>
    <property type="project" value="UniProtKB-KW"/>
</dbReference>
<dbReference type="GO" id="GO:0019646">
    <property type="term" value="P:aerobic electron transport chain"/>
    <property type="evidence" value="ECO:0007669"/>
    <property type="project" value="InterPro"/>
</dbReference>
<dbReference type="Gene3D" id="4.10.490.10">
    <property type="entry name" value="High potential iron-sulphur protein"/>
    <property type="match status" value="1"/>
</dbReference>
<dbReference type="InterPro" id="IPR000170">
    <property type="entry name" value="High_potential_FeS_prot"/>
</dbReference>
<dbReference type="InterPro" id="IPR036369">
    <property type="entry name" value="HIPIP_sf"/>
</dbReference>
<dbReference type="Pfam" id="PF01355">
    <property type="entry name" value="HIPIP"/>
    <property type="match status" value="1"/>
</dbReference>
<dbReference type="SUPFAM" id="SSF57652">
    <property type="entry name" value="HIPIP (high potential iron protein)"/>
    <property type="match status" value="1"/>
</dbReference>
<dbReference type="PROSITE" id="PS51373">
    <property type="entry name" value="HIPIP"/>
    <property type="match status" value="1"/>
</dbReference>
<evidence type="ECO:0000255" key="1">
    <source>
        <dbReference type="PROSITE-ProRule" id="PRU00705"/>
    </source>
</evidence>
<evidence type="ECO:0000305" key="2"/>
<protein>
    <recommendedName>
        <fullName>High-potential iron-sulfur protein</fullName>
        <shortName>HiPIP</shortName>
    </recommendedName>
</protein>
<gene>
    <name type="primary">hip</name>
</gene>
<feature type="chain" id="PRO_0000220426" description="High-potential iron-sulfur protein">
    <location>
        <begin position="1"/>
        <end position="57"/>
    </location>
</feature>
<feature type="binding site" evidence="1">
    <location>
        <position position="21"/>
    </location>
    <ligand>
        <name>[4Fe-4S] cluster</name>
        <dbReference type="ChEBI" id="CHEBI:49883"/>
    </ligand>
</feature>
<feature type="binding site" evidence="1">
    <location>
        <position position="24"/>
    </location>
    <ligand>
        <name>[4Fe-4S] cluster</name>
        <dbReference type="ChEBI" id="CHEBI:49883"/>
    </ligand>
</feature>
<feature type="binding site" evidence="1">
    <location>
        <position position="33"/>
    </location>
    <ligand>
        <name>[4Fe-4S] cluster</name>
        <dbReference type="ChEBI" id="CHEBI:49883"/>
    </ligand>
</feature>
<feature type="binding site" evidence="1">
    <location>
        <position position="46"/>
    </location>
    <ligand>
        <name>[4Fe-4S] cluster</name>
        <dbReference type="ChEBI" id="CHEBI:49883"/>
    </ligand>
</feature>
<proteinExistence type="evidence at protein level"/>
<name>HIP_RHOGL</name>
<accession>P38589</accession>
<comment type="function">
    <text>Specific class of high-redox-potential 4Fe-4S ferredoxins. Functions in anaerobic electron transport in most purple and in some other photosynthetic bacteria and in at least one genus (Paracoccus) of halophilic, denitrifying bacteria.</text>
</comment>
<comment type="biophysicochemical properties">
    <redoxPotential>
        <text>E(0) is +450 mV.</text>
    </redoxPotential>
</comment>
<comment type="subunit">
    <text evidence="2">Homodimer.</text>
</comment>
<comment type="similarity">
    <text evidence="1">Belongs to the high-potential iron-sulfur protein (HiPIP) family.</text>
</comment>
<sequence length="57" mass="6223">QDKIDPKMVQYQDSPKDGNKCSTCVNFEAPSSCKIVAGKISPNGWCIAYAPMEDKKG</sequence>
<organism>
    <name type="scientific">Rhodopila globiformis</name>
    <name type="common">Rhodopseudomonas globiformis</name>
    <dbReference type="NCBI Taxonomy" id="1071"/>
    <lineage>
        <taxon>Bacteria</taxon>
        <taxon>Pseudomonadati</taxon>
        <taxon>Pseudomonadota</taxon>
        <taxon>Alphaproteobacteria</taxon>
        <taxon>Acetobacterales</taxon>
        <taxon>Acetobacteraceae</taxon>
        <taxon>Rhodopila</taxon>
    </lineage>
</organism>
<keyword id="KW-0004">4Fe-4S</keyword>
<keyword id="KW-0903">Direct protein sequencing</keyword>
<keyword id="KW-0249">Electron transport</keyword>
<keyword id="KW-0408">Iron</keyword>
<keyword id="KW-0411">Iron-sulfur</keyword>
<keyword id="KW-0479">Metal-binding</keyword>
<keyword id="KW-0813">Transport</keyword>